<reference key="1">
    <citation type="journal article" date="1996" name="Yeast">
        <title>The sequence of 55 kb on the left arm of yeast chromosome XVI identifies a small nuclear RNA, a new putative protein kinase and two new putative regulators.</title>
        <authorList>
            <person name="Purnelle B."/>
            <person name="Coster F."/>
            <person name="Goffeau A."/>
        </authorList>
    </citation>
    <scope>NUCLEOTIDE SEQUENCE [GENOMIC DNA]</scope>
    <source>
        <strain>ATCC 204511 / S288c / AB972</strain>
    </source>
</reference>
<reference key="2">
    <citation type="journal article" date="1997" name="Nature">
        <title>The nucleotide sequence of Saccharomyces cerevisiae chromosome XVI.</title>
        <authorList>
            <person name="Bussey H."/>
            <person name="Storms R.K."/>
            <person name="Ahmed A."/>
            <person name="Albermann K."/>
            <person name="Allen E."/>
            <person name="Ansorge W."/>
            <person name="Araujo R."/>
            <person name="Aparicio A."/>
            <person name="Barrell B.G."/>
            <person name="Badcock K."/>
            <person name="Benes V."/>
            <person name="Botstein D."/>
            <person name="Bowman S."/>
            <person name="Brueckner M."/>
            <person name="Carpenter J."/>
            <person name="Cherry J.M."/>
            <person name="Chung E."/>
            <person name="Churcher C.M."/>
            <person name="Coster F."/>
            <person name="Davis K."/>
            <person name="Davis R.W."/>
            <person name="Dietrich F.S."/>
            <person name="Delius H."/>
            <person name="DiPaolo T."/>
            <person name="Dubois E."/>
            <person name="Duesterhoeft A."/>
            <person name="Duncan M."/>
            <person name="Floeth M."/>
            <person name="Fortin N."/>
            <person name="Friesen J.D."/>
            <person name="Fritz C."/>
            <person name="Goffeau A."/>
            <person name="Hall J."/>
            <person name="Hebling U."/>
            <person name="Heumann K."/>
            <person name="Hilbert H."/>
            <person name="Hillier L.W."/>
            <person name="Hunicke-Smith S."/>
            <person name="Hyman R.W."/>
            <person name="Johnston M."/>
            <person name="Kalman S."/>
            <person name="Kleine K."/>
            <person name="Komp C."/>
            <person name="Kurdi O."/>
            <person name="Lashkari D."/>
            <person name="Lew H."/>
            <person name="Lin A."/>
            <person name="Lin D."/>
            <person name="Louis E.J."/>
            <person name="Marathe R."/>
            <person name="Messenguy F."/>
            <person name="Mewes H.-W."/>
            <person name="Mirtipati S."/>
            <person name="Moestl D."/>
            <person name="Mueller-Auer S."/>
            <person name="Namath A."/>
            <person name="Nentwich U."/>
            <person name="Oefner P."/>
            <person name="Pearson D."/>
            <person name="Petel F.X."/>
            <person name="Pohl T.M."/>
            <person name="Purnelle B."/>
            <person name="Rajandream M.A."/>
            <person name="Rechmann S."/>
            <person name="Rieger M."/>
            <person name="Riles L."/>
            <person name="Roberts D."/>
            <person name="Schaefer M."/>
            <person name="Scharfe M."/>
            <person name="Scherens B."/>
            <person name="Schramm S."/>
            <person name="Schroeder M."/>
            <person name="Sdicu A.-M."/>
            <person name="Tettelin H."/>
            <person name="Urrestarazu L.A."/>
            <person name="Ushinsky S."/>
            <person name="Vierendeels F."/>
            <person name="Vissers S."/>
            <person name="Voss H."/>
            <person name="Walsh S.V."/>
            <person name="Wambutt R."/>
            <person name="Wang Y."/>
            <person name="Wedler E."/>
            <person name="Wedler H."/>
            <person name="Winnett E."/>
            <person name="Zhong W.-W."/>
            <person name="Zollner A."/>
            <person name="Vo D.H."/>
            <person name="Hani J."/>
        </authorList>
    </citation>
    <scope>NUCLEOTIDE SEQUENCE [LARGE SCALE GENOMIC DNA]</scope>
    <source>
        <strain>ATCC 204508 / S288c</strain>
    </source>
</reference>
<reference key="3">
    <citation type="journal article" date="2014" name="G3 (Bethesda)">
        <title>The reference genome sequence of Saccharomyces cerevisiae: Then and now.</title>
        <authorList>
            <person name="Engel S.R."/>
            <person name="Dietrich F.S."/>
            <person name="Fisk D.G."/>
            <person name="Binkley G."/>
            <person name="Balakrishnan R."/>
            <person name="Costanzo M.C."/>
            <person name="Dwight S.S."/>
            <person name="Hitz B.C."/>
            <person name="Karra K."/>
            <person name="Nash R.S."/>
            <person name="Weng S."/>
            <person name="Wong E.D."/>
            <person name="Lloyd P."/>
            <person name="Skrzypek M.S."/>
            <person name="Miyasato S.R."/>
            <person name="Simison M."/>
            <person name="Cherry J.M."/>
        </authorList>
    </citation>
    <scope>GENOME REANNOTATION</scope>
    <source>
        <strain>ATCC 204508 / S288c</strain>
    </source>
</reference>
<reference key="4">
    <citation type="submission" date="2005-06" db="UniProtKB">
        <authorList>
            <person name="Bienvenut W.V."/>
            <person name="Peters C."/>
        </authorList>
    </citation>
    <scope>PROTEIN SEQUENCE OF 158-165; 220-246 AND 259-266</scope>
    <scope>IDENTIFICATION BY MASS SPECTROMETRY</scope>
</reference>
<reference key="5">
    <citation type="journal article" date="2000" name="J. Cell Biol.">
        <title>Prm1p, a pheromone-regulated multispanning membrane protein, facilitates plasma membrane fusion during yeast mating.</title>
        <authorList>
            <person name="Heiman M.G."/>
            <person name="Walter P."/>
        </authorList>
    </citation>
    <scope>NOMENCLATURE</scope>
</reference>
<sequence>MIADSSVLKKHTAIKRSTRIISLTLVLLGVFSFLLLTWNDSLEFYNSADPSENKKNSEEESEKKFVYKLPNLLKTADSFLSNENELNFQKVKEEISNIQSEVEVDIPEPSSKATSKFSSRSFQTDNVVTATTTTTLNPRSSSLALQKNCDHKKFDPRTDFLDIIRTSPAVLFIKSSQADSIFLKNLLQREFEISPELATVDLEKHSHGYELEKYIKQNKLNIDTSAALESIQSPYLFLNGISVINRGMVRDIIEPHSKGLLLPLLKSEARGNLLVEKKDIPSNS</sequence>
<evidence type="ECO:0000255" key="1"/>
<evidence type="ECO:0000255" key="2">
    <source>
        <dbReference type="PROSITE-ProRule" id="PRU00686"/>
    </source>
</evidence>
<evidence type="ECO:0000305" key="3"/>
<keyword id="KW-0903">Direct protein sequencing</keyword>
<keyword id="KW-0472">Membrane</keyword>
<keyword id="KW-1185">Reference proteome</keyword>
<keyword id="KW-0812">Transmembrane</keyword>
<keyword id="KW-1133">Transmembrane helix</keyword>
<feature type="chain" id="PRO_0000058579" description="Pheromone-regulated membrane protein 4">
    <location>
        <begin position="1"/>
        <end position="284"/>
    </location>
</feature>
<feature type="transmembrane region" description="Helical" evidence="1">
    <location>
        <begin position="20"/>
        <end position="38"/>
    </location>
</feature>
<feature type="domain" description="Glutaredoxin" evidence="2">
    <location>
        <begin position="157"/>
        <end position="272"/>
    </location>
</feature>
<protein>
    <recommendedName>
        <fullName>Pheromone-regulated membrane protein 4</fullName>
    </recommendedName>
</protein>
<name>PRM4_YEAST</name>
<accession>Q12498</accession>
<accession>D6W3L2</accession>
<comment type="interaction">
    <interactant intactId="EBI-32462">
        <id>Q12498</id>
    </interactant>
    <interactant intactId="EBI-24499">
        <id>P38768</id>
        <label>PIH1</label>
    </interactant>
    <organismsDiffer>false</organismsDiffer>
    <experiments>3</experiments>
</comment>
<comment type="subcellular location">
    <subcellularLocation>
        <location evidence="3">Membrane</location>
        <topology evidence="3">Single-pass membrane protein</topology>
    </subcellularLocation>
</comment>
<dbReference type="EMBL" id="X96770">
    <property type="protein sequence ID" value="CAA65565.1"/>
    <property type="molecule type" value="Genomic_DNA"/>
</dbReference>
<dbReference type="EMBL" id="Z73512">
    <property type="protein sequence ID" value="CAA97861.1"/>
    <property type="molecule type" value="Genomic_DNA"/>
</dbReference>
<dbReference type="EMBL" id="BK006949">
    <property type="protein sequence ID" value="DAA11278.1"/>
    <property type="molecule type" value="Genomic_DNA"/>
</dbReference>
<dbReference type="PIR" id="S65167">
    <property type="entry name" value="S65167"/>
</dbReference>
<dbReference type="RefSeq" id="NP_015169.1">
    <property type="nucleotide sequence ID" value="NM_001183970.1"/>
</dbReference>
<dbReference type="SMR" id="Q12498"/>
<dbReference type="BioGRID" id="36027">
    <property type="interactions" value="82"/>
</dbReference>
<dbReference type="DIP" id="DIP-5502N"/>
<dbReference type="FunCoup" id="Q12498">
    <property type="interactions" value="96"/>
</dbReference>
<dbReference type="IntAct" id="Q12498">
    <property type="interactions" value="3"/>
</dbReference>
<dbReference type="MINT" id="Q12498"/>
<dbReference type="STRING" id="4932.YPL156C"/>
<dbReference type="PaxDb" id="4932-YPL156C"/>
<dbReference type="PeptideAtlas" id="Q12498"/>
<dbReference type="EnsemblFungi" id="YPL156C_mRNA">
    <property type="protein sequence ID" value="YPL156C"/>
    <property type="gene ID" value="YPL156C"/>
</dbReference>
<dbReference type="GeneID" id="855947"/>
<dbReference type="KEGG" id="sce:YPL156C"/>
<dbReference type="AGR" id="SGD:S000006077"/>
<dbReference type="SGD" id="S000006077">
    <property type="gene designation" value="PRM4"/>
</dbReference>
<dbReference type="VEuPathDB" id="FungiDB:YPL156C"/>
<dbReference type="eggNOG" id="KOG1752">
    <property type="taxonomic scope" value="Eukaryota"/>
</dbReference>
<dbReference type="HOGENOM" id="CLU_066481_0_0_1"/>
<dbReference type="InParanoid" id="Q12498"/>
<dbReference type="OMA" id="IEPHSKG"/>
<dbReference type="OrthoDB" id="4035655at2759"/>
<dbReference type="BioCyc" id="YEAST:G3O-34052-MONOMER"/>
<dbReference type="BioGRID-ORCS" id="855947">
    <property type="hits" value="0 hits in 10 CRISPR screens"/>
</dbReference>
<dbReference type="PRO" id="PR:Q12498"/>
<dbReference type="Proteomes" id="UP000002311">
    <property type="component" value="Chromosome XVI"/>
</dbReference>
<dbReference type="RNAct" id="Q12498">
    <property type="molecule type" value="protein"/>
</dbReference>
<dbReference type="GO" id="GO:0000324">
    <property type="term" value="C:fungal-type vacuole"/>
    <property type="evidence" value="ECO:0007005"/>
    <property type="project" value="SGD"/>
</dbReference>
<dbReference type="GO" id="GO:0016020">
    <property type="term" value="C:membrane"/>
    <property type="evidence" value="ECO:0000255"/>
    <property type="project" value="SGD"/>
</dbReference>
<dbReference type="Gene3D" id="3.40.30.10">
    <property type="entry name" value="Glutaredoxin"/>
    <property type="match status" value="1"/>
</dbReference>
<dbReference type="PROSITE" id="PS51354">
    <property type="entry name" value="GLUTAREDOXIN_2"/>
    <property type="match status" value="1"/>
</dbReference>
<organism>
    <name type="scientific">Saccharomyces cerevisiae (strain ATCC 204508 / S288c)</name>
    <name type="common">Baker's yeast</name>
    <dbReference type="NCBI Taxonomy" id="559292"/>
    <lineage>
        <taxon>Eukaryota</taxon>
        <taxon>Fungi</taxon>
        <taxon>Dikarya</taxon>
        <taxon>Ascomycota</taxon>
        <taxon>Saccharomycotina</taxon>
        <taxon>Saccharomycetes</taxon>
        <taxon>Saccharomycetales</taxon>
        <taxon>Saccharomycetaceae</taxon>
        <taxon>Saccharomyces</taxon>
    </lineage>
</organism>
<proteinExistence type="evidence at protein level"/>
<gene>
    <name type="primary">PRM4</name>
    <name type="ordered locus">YPL156C</name>
    <name type="ORF">P2578</name>
</gene>